<evidence type="ECO:0000250" key="1"/>
<evidence type="ECO:0000255" key="2">
    <source>
        <dbReference type="HAMAP-Rule" id="MF_00508"/>
    </source>
</evidence>
<evidence type="ECO:0000305" key="3"/>
<evidence type="ECO:0007829" key="4">
    <source>
        <dbReference type="PDB" id="4V67"/>
    </source>
</evidence>
<evidence type="ECO:0007829" key="5">
    <source>
        <dbReference type="PDB" id="4V9K"/>
    </source>
</evidence>
<evidence type="ECO:0007829" key="6">
    <source>
        <dbReference type="PDB" id="4V9Q"/>
    </source>
</evidence>
<accession>P62653</accession>
<proteinExistence type="evidence at protein level"/>
<comment type="function">
    <text evidence="2">Involved in the binding of tRNA to the ribosomes.</text>
</comment>
<comment type="subunit">
    <text evidence="2">Part of the 30S ribosomal subunit.</text>
</comment>
<comment type="similarity">
    <text evidence="2">Belongs to the universal ribosomal protein uS10 family.</text>
</comment>
<keyword id="KW-0002">3D-structure</keyword>
<keyword id="KW-0687">Ribonucleoprotein</keyword>
<keyword id="KW-0689">Ribosomal protein</keyword>
<dbReference type="EMBL" id="AE017221">
    <property type="protein sequence ID" value="AAS81671.1"/>
    <property type="molecule type" value="Genomic_DNA"/>
</dbReference>
<dbReference type="RefSeq" id="WP_008633424.1">
    <property type="nucleotide sequence ID" value="NC_005835.1"/>
</dbReference>
<dbReference type="PDB" id="4KVB">
    <property type="method" value="X-ray"/>
    <property type="resolution" value="4.20 A"/>
    <property type="chains" value="J=1-105"/>
</dbReference>
<dbReference type="PDB" id="4V4J">
    <property type="method" value="X-ray"/>
    <property type="resolution" value="3.83 A"/>
    <property type="chains" value="k=1-105"/>
</dbReference>
<dbReference type="PDB" id="4V63">
    <property type="method" value="X-ray"/>
    <property type="resolution" value="3.21 A"/>
    <property type="chains" value="AJ/CJ=1-105"/>
</dbReference>
<dbReference type="PDB" id="4V67">
    <property type="method" value="X-ray"/>
    <property type="resolution" value="3.00 A"/>
    <property type="chains" value="AJ/CJ=1-105"/>
</dbReference>
<dbReference type="PDB" id="4V7P">
    <property type="method" value="X-ray"/>
    <property type="resolution" value="3.62 A"/>
    <property type="chains" value="AJ/DJ=3-100"/>
</dbReference>
<dbReference type="PDB" id="4V83">
    <property type="method" value="X-ray"/>
    <property type="resolution" value="3.50 A"/>
    <property type="chains" value="AJ/CJ=3-100"/>
</dbReference>
<dbReference type="PDB" id="4V84">
    <property type="method" value="X-ray"/>
    <property type="resolution" value="3.40 A"/>
    <property type="chains" value="AJ/CJ=3-100"/>
</dbReference>
<dbReference type="PDB" id="4V9J">
    <property type="method" value="X-ray"/>
    <property type="resolution" value="3.86 A"/>
    <property type="chains" value="AJ/CJ=3-101"/>
</dbReference>
<dbReference type="PDB" id="4V9K">
    <property type="method" value="X-ray"/>
    <property type="resolution" value="3.50 A"/>
    <property type="chains" value="AJ/CJ=3-101"/>
</dbReference>
<dbReference type="PDB" id="4V9L">
    <property type="method" value="X-ray"/>
    <property type="resolution" value="3.50 A"/>
    <property type="chains" value="AJ/CJ=3-101"/>
</dbReference>
<dbReference type="PDB" id="4V9M">
    <property type="method" value="X-ray"/>
    <property type="resolution" value="4.00 A"/>
    <property type="chains" value="AJ/CJ=3-101"/>
</dbReference>
<dbReference type="PDB" id="4V9N">
    <property type="method" value="X-ray"/>
    <property type="resolution" value="3.40 A"/>
    <property type="chains" value="AJ/CJ=3-100"/>
</dbReference>
<dbReference type="PDB" id="4V9Q">
    <property type="method" value="X-ray"/>
    <property type="resolution" value="3.40 A"/>
    <property type="chains" value="BJ/DJ=3-100"/>
</dbReference>
<dbReference type="PDB" id="4W29">
    <property type="method" value="X-ray"/>
    <property type="resolution" value="3.80 A"/>
    <property type="chains" value="AJ/CJ=3-101"/>
</dbReference>
<dbReference type="PDB" id="4XEJ">
    <property type="method" value="X-ray"/>
    <property type="resolution" value="3.80 A"/>
    <property type="chains" value="AS10/BS10=3-100"/>
</dbReference>
<dbReference type="PDB" id="5J4D">
    <property type="method" value="X-ray"/>
    <property type="resolution" value="3.10 A"/>
    <property type="chains" value="SA/XC=1-105"/>
</dbReference>
<dbReference type="PDB" id="5V8I">
    <property type="method" value="X-ray"/>
    <property type="resolution" value="3.25 A"/>
    <property type="chains" value="1j/2j=1-105"/>
</dbReference>
<dbReference type="PDB" id="6B4V">
    <property type="method" value="X-ray"/>
    <property type="resolution" value="3.40 A"/>
    <property type="chains" value="SA/WC=1-105"/>
</dbReference>
<dbReference type="PDB" id="6BOH">
    <property type="method" value="X-ray"/>
    <property type="resolution" value="3.40 A"/>
    <property type="chains" value="TA/YC=1-105"/>
</dbReference>
<dbReference type="PDB" id="6BOK">
    <property type="method" value="X-ray"/>
    <property type="resolution" value="3.55 A"/>
    <property type="chains" value="RA/UC=1-105"/>
</dbReference>
<dbReference type="PDB" id="6N1D">
    <property type="method" value="X-ray"/>
    <property type="resolution" value="3.20 A"/>
    <property type="chains" value="AS10/BS10=2-105"/>
</dbReference>
<dbReference type="PDBsum" id="4KVB"/>
<dbReference type="PDBsum" id="4V4J"/>
<dbReference type="PDBsum" id="4V63"/>
<dbReference type="PDBsum" id="4V67"/>
<dbReference type="PDBsum" id="4V7P"/>
<dbReference type="PDBsum" id="4V83"/>
<dbReference type="PDBsum" id="4V84"/>
<dbReference type="PDBsum" id="4V9J"/>
<dbReference type="PDBsum" id="4V9K"/>
<dbReference type="PDBsum" id="4V9L"/>
<dbReference type="PDBsum" id="4V9M"/>
<dbReference type="PDBsum" id="4V9N"/>
<dbReference type="PDBsum" id="4V9Q"/>
<dbReference type="PDBsum" id="4W29"/>
<dbReference type="PDBsum" id="4XEJ"/>
<dbReference type="PDBsum" id="5J4D"/>
<dbReference type="PDBsum" id="5V8I"/>
<dbReference type="PDBsum" id="6B4V"/>
<dbReference type="PDBsum" id="6BOH"/>
<dbReference type="PDBsum" id="6BOK"/>
<dbReference type="PDBsum" id="6N1D"/>
<dbReference type="SMR" id="P62653"/>
<dbReference type="IntAct" id="P62653">
    <property type="interactions" value="4"/>
</dbReference>
<dbReference type="GeneID" id="3167932"/>
<dbReference type="KEGG" id="tth:TT_C1329"/>
<dbReference type="eggNOG" id="COG0051">
    <property type="taxonomic scope" value="Bacteria"/>
</dbReference>
<dbReference type="HOGENOM" id="CLU_122625_1_3_0"/>
<dbReference type="OrthoDB" id="9804464at2"/>
<dbReference type="EvolutionaryTrace" id="P62653"/>
<dbReference type="Proteomes" id="UP000000592">
    <property type="component" value="Chromosome"/>
</dbReference>
<dbReference type="GO" id="GO:1990904">
    <property type="term" value="C:ribonucleoprotein complex"/>
    <property type="evidence" value="ECO:0007669"/>
    <property type="project" value="UniProtKB-KW"/>
</dbReference>
<dbReference type="GO" id="GO:0005840">
    <property type="term" value="C:ribosome"/>
    <property type="evidence" value="ECO:0007669"/>
    <property type="project" value="UniProtKB-KW"/>
</dbReference>
<dbReference type="GO" id="GO:0003735">
    <property type="term" value="F:structural constituent of ribosome"/>
    <property type="evidence" value="ECO:0007669"/>
    <property type="project" value="InterPro"/>
</dbReference>
<dbReference type="GO" id="GO:0000049">
    <property type="term" value="F:tRNA binding"/>
    <property type="evidence" value="ECO:0007669"/>
    <property type="project" value="UniProtKB-UniRule"/>
</dbReference>
<dbReference type="GO" id="GO:0006412">
    <property type="term" value="P:translation"/>
    <property type="evidence" value="ECO:0007669"/>
    <property type="project" value="UniProtKB-UniRule"/>
</dbReference>
<dbReference type="FunFam" id="3.30.70.600:FF:000003">
    <property type="entry name" value="30S ribosomal protein S10"/>
    <property type="match status" value="1"/>
</dbReference>
<dbReference type="Gene3D" id="3.30.70.600">
    <property type="entry name" value="Ribosomal protein S10 domain"/>
    <property type="match status" value="1"/>
</dbReference>
<dbReference type="HAMAP" id="MF_00508">
    <property type="entry name" value="Ribosomal_uS10"/>
    <property type="match status" value="1"/>
</dbReference>
<dbReference type="InterPro" id="IPR001848">
    <property type="entry name" value="Ribosomal_uS10"/>
</dbReference>
<dbReference type="InterPro" id="IPR018268">
    <property type="entry name" value="Ribosomal_uS10_CS"/>
</dbReference>
<dbReference type="InterPro" id="IPR027486">
    <property type="entry name" value="Ribosomal_uS10_dom"/>
</dbReference>
<dbReference type="InterPro" id="IPR036838">
    <property type="entry name" value="Ribosomal_uS10_dom_sf"/>
</dbReference>
<dbReference type="NCBIfam" id="NF001861">
    <property type="entry name" value="PRK00596.1"/>
    <property type="match status" value="1"/>
</dbReference>
<dbReference type="NCBIfam" id="TIGR01049">
    <property type="entry name" value="rpsJ_bact"/>
    <property type="match status" value="1"/>
</dbReference>
<dbReference type="PANTHER" id="PTHR11700">
    <property type="entry name" value="30S RIBOSOMAL PROTEIN S10 FAMILY MEMBER"/>
    <property type="match status" value="1"/>
</dbReference>
<dbReference type="Pfam" id="PF00338">
    <property type="entry name" value="Ribosomal_S10"/>
    <property type="match status" value="1"/>
</dbReference>
<dbReference type="PRINTS" id="PR00971">
    <property type="entry name" value="RIBOSOMALS10"/>
</dbReference>
<dbReference type="SMART" id="SM01403">
    <property type="entry name" value="Ribosomal_S10"/>
    <property type="match status" value="1"/>
</dbReference>
<dbReference type="SUPFAM" id="SSF54999">
    <property type="entry name" value="Ribosomal protein S10"/>
    <property type="match status" value="1"/>
</dbReference>
<dbReference type="PROSITE" id="PS00361">
    <property type="entry name" value="RIBOSOMAL_S10"/>
    <property type="match status" value="1"/>
</dbReference>
<sequence length="105" mass="11930">MPKIRIKLRGFDHKTLDASAQKIVEAARRSGAQVSGPIPLPTRVRRFTVIRGPFKHKDSREHFELRTHNRLVDIINPNRKTIEQLMTLDLPTGVEIEIKTVGGGR</sequence>
<organism>
    <name type="scientific">Thermus thermophilus (strain ATCC BAA-163 / DSM 7039 / HB27)</name>
    <dbReference type="NCBI Taxonomy" id="262724"/>
    <lineage>
        <taxon>Bacteria</taxon>
        <taxon>Thermotogati</taxon>
        <taxon>Deinococcota</taxon>
        <taxon>Deinococci</taxon>
        <taxon>Thermales</taxon>
        <taxon>Thermaceae</taxon>
        <taxon>Thermus</taxon>
    </lineage>
</organism>
<name>RS10_THET2</name>
<feature type="initiator methionine" description="Removed" evidence="1">
    <location>
        <position position="1"/>
    </location>
</feature>
<feature type="chain" id="PRO_0000146619" description="Small ribosomal subunit protein uS10">
    <location>
        <begin position="2"/>
        <end position="105"/>
    </location>
</feature>
<feature type="strand" evidence="4">
    <location>
        <begin position="4"/>
        <end position="11"/>
    </location>
</feature>
<feature type="helix" evidence="4">
    <location>
        <begin position="13"/>
        <end position="28"/>
    </location>
</feature>
<feature type="strand" evidence="5">
    <location>
        <begin position="30"/>
        <end position="32"/>
    </location>
</feature>
<feature type="strand" evidence="4">
    <location>
        <begin position="34"/>
        <end position="39"/>
    </location>
</feature>
<feature type="strand" evidence="4">
    <location>
        <begin position="43"/>
        <end position="49"/>
    </location>
</feature>
<feature type="strand" evidence="4">
    <location>
        <begin position="51"/>
        <end position="55"/>
    </location>
</feature>
<feature type="strand" evidence="4">
    <location>
        <begin position="57"/>
        <end position="59"/>
    </location>
</feature>
<feature type="strand" evidence="4">
    <location>
        <begin position="61"/>
        <end position="68"/>
    </location>
</feature>
<feature type="strand" evidence="4">
    <location>
        <begin position="70"/>
        <end position="76"/>
    </location>
</feature>
<feature type="helix" evidence="4">
    <location>
        <begin position="79"/>
        <end position="84"/>
    </location>
</feature>
<feature type="turn" evidence="6">
    <location>
        <begin position="85"/>
        <end position="87"/>
    </location>
</feature>
<feature type="strand" evidence="4">
    <location>
        <begin position="92"/>
        <end position="99"/>
    </location>
</feature>
<reference key="1">
    <citation type="journal article" date="2004" name="Nat. Biotechnol.">
        <title>The genome sequence of the extreme thermophile Thermus thermophilus.</title>
        <authorList>
            <person name="Henne A."/>
            <person name="Brueggemann H."/>
            <person name="Raasch C."/>
            <person name="Wiezer A."/>
            <person name="Hartsch T."/>
            <person name="Liesegang H."/>
            <person name="Johann A."/>
            <person name="Lienard T."/>
            <person name="Gohl O."/>
            <person name="Martinez-Arias R."/>
            <person name="Jacobi C."/>
            <person name="Starkuviene V."/>
            <person name="Schlenczeck S."/>
            <person name="Dencker S."/>
            <person name="Huber R."/>
            <person name="Klenk H.-P."/>
            <person name="Kramer W."/>
            <person name="Merkl R."/>
            <person name="Gottschalk G."/>
            <person name="Fritz H.-J."/>
        </authorList>
    </citation>
    <scope>NUCLEOTIDE SEQUENCE [LARGE SCALE GENOMIC DNA]</scope>
    <source>
        <strain>ATCC BAA-163 / DSM 7039 / HB27</strain>
    </source>
</reference>
<protein>
    <recommendedName>
        <fullName evidence="2">Small ribosomal subunit protein uS10</fullName>
    </recommendedName>
    <alternativeName>
        <fullName evidence="3">30S ribosomal protein S10</fullName>
    </alternativeName>
</protein>
<gene>
    <name evidence="2" type="primary">rpsJ</name>
    <name evidence="2" type="synonym">rps10</name>
    <name type="ordered locus">TT_C1329</name>
</gene>